<proteinExistence type="evidence at protein level"/>
<feature type="chain" id="PRO_0000315968" description="Probable sterol O-acyltransferase 2">
    <location>
        <begin position="1"/>
        <end position="472"/>
    </location>
</feature>
<feature type="transmembrane region" description="Helical" evidence="3">
    <location>
        <begin position="61"/>
        <end position="81"/>
    </location>
</feature>
<feature type="transmembrane region" description="Helical" evidence="3">
    <location>
        <begin position="111"/>
        <end position="131"/>
    </location>
</feature>
<feature type="transmembrane region" description="Helical" evidence="3">
    <location>
        <begin position="135"/>
        <end position="155"/>
    </location>
</feature>
<feature type="transmembrane region" description="Helical" evidence="3">
    <location>
        <begin position="170"/>
        <end position="190"/>
    </location>
</feature>
<feature type="transmembrane region" description="Helical" evidence="3">
    <location>
        <begin position="262"/>
        <end position="282"/>
    </location>
</feature>
<feature type="transmembrane region" description="Helical" evidence="3">
    <location>
        <begin position="317"/>
        <end position="337"/>
    </location>
</feature>
<feature type="transmembrane region" description="Helical" evidence="3">
    <location>
        <begin position="452"/>
        <end position="472"/>
    </location>
</feature>
<feature type="short sequence motif" description="FYXDWWN motif" evidence="2">
    <location>
        <begin position="355"/>
        <end position="361"/>
    </location>
</feature>
<feature type="active site" evidence="2">
    <location>
        <position position="409"/>
    </location>
</feature>
<feature type="modified residue" description="Phosphoserine" evidence="4">
    <location>
        <position position="12"/>
    </location>
</feature>
<feature type="glycosylation site" description="N-linked (GlcNAc...) asparagine" evidence="3">
    <location>
        <position position="161"/>
    </location>
</feature>
<feature type="glycosylation site" description="N-linked (GlcNAc...) asparagine" evidence="3">
    <location>
        <position position="233"/>
    </location>
</feature>
<feature type="glycosylation site" description="N-linked (GlcNAc...) asparagine" evidence="3">
    <location>
        <position position="342"/>
    </location>
</feature>
<reference key="1">
    <citation type="journal article" date="2002" name="Nature">
        <title>The genome sequence of Schizosaccharomyces pombe.</title>
        <authorList>
            <person name="Wood V."/>
            <person name="Gwilliam R."/>
            <person name="Rajandream M.A."/>
            <person name="Lyne M.H."/>
            <person name="Lyne R."/>
            <person name="Stewart A."/>
            <person name="Sgouros J.G."/>
            <person name="Peat N."/>
            <person name="Hayles J."/>
            <person name="Baker S.G."/>
            <person name="Basham D."/>
            <person name="Bowman S."/>
            <person name="Brooks K."/>
            <person name="Brown D."/>
            <person name="Brown S."/>
            <person name="Chillingworth T."/>
            <person name="Churcher C.M."/>
            <person name="Collins M."/>
            <person name="Connor R."/>
            <person name="Cronin A."/>
            <person name="Davis P."/>
            <person name="Feltwell T."/>
            <person name="Fraser A."/>
            <person name="Gentles S."/>
            <person name="Goble A."/>
            <person name="Hamlin N."/>
            <person name="Harris D.E."/>
            <person name="Hidalgo J."/>
            <person name="Hodgson G."/>
            <person name="Holroyd S."/>
            <person name="Hornsby T."/>
            <person name="Howarth S."/>
            <person name="Huckle E.J."/>
            <person name="Hunt S."/>
            <person name="Jagels K."/>
            <person name="James K.D."/>
            <person name="Jones L."/>
            <person name="Jones M."/>
            <person name="Leather S."/>
            <person name="McDonald S."/>
            <person name="McLean J."/>
            <person name="Mooney P."/>
            <person name="Moule S."/>
            <person name="Mungall K.L."/>
            <person name="Murphy L.D."/>
            <person name="Niblett D."/>
            <person name="Odell C."/>
            <person name="Oliver K."/>
            <person name="O'Neil S."/>
            <person name="Pearson D."/>
            <person name="Quail M.A."/>
            <person name="Rabbinowitsch E."/>
            <person name="Rutherford K.M."/>
            <person name="Rutter S."/>
            <person name="Saunders D."/>
            <person name="Seeger K."/>
            <person name="Sharp S."/>
            <person name="Skelton J."/>
            <person name="Simmonds M.N."/>
            <person name="Squares R."/>
            <person name="Squares S."/>
            <person name="Stevens K."/>
            <person name="Taylor K."/>
            <person name="Taylor R.G."/>
            <person name="Tivey A."/>
            <person name="Walsh S.V."/>
            <person name="Warren T."/>
            <person name="Whitehead S."/>
            <person name="Woodward J.R."/>
            <person name="Volckaert G."/>
            <person name="Aert R."/>
            <person name="Robben J."/>
            <person name="Grymonprez B."/>
            <person name="Weltjens I."/>
            <person name="Vanstreels E."/>
            <person name="Rieger M."/>
            <person name="Schaefer M."/>
            <person name="Mueller-Auer S."/>
            <person name="Gabel C."/>
            <person name="Fuchs M."/>
            <person name="Duesterhoeft A."/>
            <person name="Fritzc C."/>
            <person name="Holzer E."/>
            <person name="Moestl D."/>
            <person name="Hilbert H."/>
            <person name="Borzym K."/>
            <person name="Langer I."/>
            <person name="Beck A."/>
            <person name="Lehrach H."/>
            <person name="Reinhardt R."/>
            <person name="Pohl T.M."/>
            <person name="Eger P."/>
            <person name="Zimmermann W."/>
            <person name="Wedler H."/>
            <person name="Wambutt R."/>
            <person name="Purnelle B."/>
            <person name="Goffeau A."/>
            <person name="Cadieu E."/>
            <person name="Dreano S."/>
            <person name="Gloux S."/>
            <person name="Lelaure V."/>
            <person name="Mottier S."/>
            <person name="Galibert F."/>
            <person name="Aves S.J."/>
            <person name="Xiang Z."/>
            <person name="Hunt C."/>
            <person name="Moore K."/>
            <person name="Hurst S.M."/>
            <person name="Lucas M."/>
            <person name="Rochet M."/>
            <person name="Gaillardin C."/>
            <person name="Tallada V.A."/>
            <person name="Garzon A."/>
            <person name="Thode G."/>
            <person name="Daga R.R."/>
            <person name="Cruzado L."/>
            <person name="Jimenez J."/>
            <person name="Sanchez M."/>
            <person name="del Rey F."/>
            <person name="Benito J."/>
            <person name="Dominguez A."/>
            <person name="Revuelta J.L."/>
            <person name="Moreno S."/>
            <person name="Armstrong J."/>
            <person name="Forsburg S.L."/>
            <person name="Cerutti L."/>
            <person name="Lowe T."/>
            <person name="McCombie W.R."/>
            <person name="Paulsen I."/>
            <person name="Potashkin J."/>
            <person name="Shpakovski G.V."/>
            <person name="Ussery D."/>
            <person name="Barrell B.G."/>
            <person name="Nurse P."/>
        </authorList>
    </citation>
    <scope>NUCLEOTIDE SEQUENCE [LARGE SCALE GENOMIC DNA]</scope>
    <source>
        <strain>972 / ATCC 24843</strain>
    </source>
</reference>
<reference key="2">
    <citation type="journal article" date="2008" name="J. Proteome Res.">
        <title>Phosphoproteome analysis of fission yeast.</title>
        <authorList>
            <person name="Wilson-Grady J.T."/>
            <person name="Villen J."/>
            <person name="Gygi S.P."/>
        </authorList>
    </citation>
    <scope>PHOSPHORYLATION [LARGE SCALE ANALYSIS] AT SER-12</scope>
    <scope>IDENTIFICATION BY MASS SPECTROMETRY</scope>
</reference>
<name>AREH2_SCHPO</name>
<comment type="function">
    <text evidence="1">Sterol O-acyltransferase that catalyzes the formation of stery esters.</text>
</comment>
<comment type="subcellular location">
    <subcellularLocation>
        <location evidence="1">Endoplasmic reticulum membrane</location>
        <topology evidence="3">Multi-pass membrane protein</topology>
    </subcellularLocation>
</comment>
<comment type="similarity">
    <text evidence="5">Belongs to the membrane-bound acyltransferase family. Sterol o-acyltransferase subfamily.</text>
</comment>
<keyword id="KW-0012">Acyltransferase</keyword>
<keyword id="KW-0256">Endoplasmic reticulum</keyword>
<keyword id="KW-0325">Glycoprotein</keyword>
<keyword id="KW-0472">Membrane</keyword>
<keyword id="KW-0597">Phosphoprotein</keyword>
<keyword id="KW-1185">Reference proteome</keyword>
<keyword id="KW-0808">Transferase</keyword>
<keyword id="KW-0812">Transmembrane</keyword>
<keyword id="KW-1133">Transmembrane helix</keyword>
<gene>
    <name type="primary">are2</name>
    <name type="ORF">SPCP1E11.05c</name>
</gene>
<organism>
    <name type="scientific">Schizosaccharomyces pombe (strain 972 / ATCC 24843)</name>
    <name type="common">Fission yeast</name>
    <dbReference type="NCBI Taxonomy" id="284812"/>
    <lineage>
        <taxon>Eukaryota</taxon>
        <taxon>Fungi</taxon>
        <taxon>Dikarya</taxon>
        <taxon>Ascomycota</taxon>
        <taxon>Taphrinomycotina</taxon>
        <taxon>Schizosaccharomycetes</taxon>
        <taxon>Schizosaccharomycetales</taxon>
        <taxon>Schizosaccharomycetaceae</taxon>
        <taxon>Schizosaccharomyces</taxon>
    </lineage>
</organism>
<accession>Q9UU82</accession>
<evidence type="ECO:0000250" key="1">
    <source>
        <dbReference type="UniProtKB" id="P25628"/>
    </source>
</evidence>
<evidence type="ECO:0000250" key="2">
    <source>
        <dbReference type="UniProtKB" id="P35610"/>
    </source>
</evidence>
<evidence type="ECO:0000255" key="3"/>
<evidence type="ECO:0000269" key="4">
    <source>
    </source>
</evidence>
<evidence type="ECO:0000305" key="5"/>
<dbReference type="EC" id="2.3.1.-"/>
<dbReference type="EMBL" id="CU329672">
    <property type="protein sequence ID" value="CAB54864.1"/>
    <property type="molecule type" value="Genomic_DNA"/>
</dbReference>
<dbReference type="PIR" id="T41684">
    <property type="entry name" value="T41684"/>
</dbReference>
<dbReference type="RefSeq" id="NP_588558.1">
    <property type="nucleotide sequence ID" value="NM_001023545.2"/>
</dbReference>
<dbReference type="SMR" id="Q9UU82"/>
<dbReference type="BioGRID" id="275435">
    <property type="interactions" value="53"/>
</dbReference>
<dbReference type="FunCoup" id="Q9UU82">
    <property type="interactions" value="170"/>
</dbReference>
<dbReference type="STRING" id="284812.Q9UU82"/>
<dbReference type="GlyCosmos" id="Q9UU82">
    <property type="glycosylation" value="3 sites, No reported glycans"/>
</dbReference>
<dbReference type="iPTMnet" id="Q9UU82"/>
<dbReference type="PaxDb" id="4896-SPCP1E11.05c.1"/>
<dbReference type="EnsemblFungi" id="SPCP1E11.05c.1">
    <property type="protein sequence ID" value="SPCP1E11.05c.1:pep"/>
    <property type="gene ID" value="SPCP1E11.05c"/>
</dbReference>
<dbReference type="GeneID" id="2538854"/>
<dbReference type="KEGG" id="spo:2538854"/>
<dbReference type="PomBase" id="SPCP1E11.05c">
    <property type="gene designation" value="are2"/>
</dbReference>
<dbReference type="VEuPathDB" id="FungiDB:SPCP1E11.05c"/>
<dbReference type="eggNOG" id="KOG0380">
    <property type="taxonomic scope" value="Eukaryota"/>
</dbReference>
<dbReference type="HOGENOM" id="CLU_018190_2_0_1"/>
<dbReference type="InParanoid" id="Q9UU82"/>
<dbReference type="OMA" id="FICQMLQ"/>
<dbReference type="PhylomeDB" id="Q9UU82"/>
<dbReference type="PRO" id="PR:Q9UU82"/>
<dbReference type="Proteomes" id="UP000002485">
    <property type="component" value="Chromosome III"/>
</dbReference>
<dbReference type="GO" id="GO:0032541">
    <property type="term" value="C:cortical endoplasmic reticulum"/>
    <property type="evidence" value="ECO:0000314"/>
    <property type="project" value="PomBase"/>
</dbReference>
<dbReference type="GO" id="GO:0005789">
    <property type="term" value="C:endoplasmic reticulum membrane"/>
    <property type="evidence" value="ECO:0000318"/>
    <property type="project" value="GO_Central"/>
</dbReference>
<dbReference type="GO" id="GO:0097038">
    <property type="term" value="C:perinuclear endoplasmic reticulum"/>
    <property type="evidence" value="ECO:0000314"/>
    <property type="project" value="PomBase"/>
</dbReference>
<dbReference type="GO" id="GO:0034737">
    <property type="term" value="F:ergosterol O-acyltransferase activity"/>
    <property type="evidence" value="ECO:0000318"/>
    <property type="project" value="GO_Central"/>
</dbReference>
<dbReference type="GO" id="GO:0008204">
    <property type="term" value="P:ergosterol metabolic process"/>
    <property type="evidence" value="ECO:0000318"/>
    <property type="project" value="GO_Central"/>
</dbReference>
<dbReference type="GO" id="GO:0140042">
    <property type="term" value="P:lipid droplet formation"/>
    <property type="evidence" value="ECO:0000315"/>
    <property type="project" value="PomBase"/>
</dbReference>
<dbReference type="InterPro" id="IPR004299">
    <property type="entry name" value="MBOAT_fam"/>
</dbReference>
<dbReference type="InterPro" id="IPR014371">
    <property type="entry name" value="Oat_ACAT_DAG_ARE"/>
</dbReference>
<dbReference type="PANTHER" id="PTHR10408">
    <property type="entry name" value="STEROL O-ACYLTRANSFERASE"/>
    <property type="match status" value="1"/>
</dbReference>
<dbReference type="PANTHER" id="PTHR10408:SF9">
    <property type="entry name" value="STEROL O-ACYLTRANSFERASE 2-RELATED"/>
    <property type="match status" value="1"/>
</dbReference>
<dbReference type="Pfam" id="PF03062">
    <property type="entry name" value="MBOAT"/>
    <property type="match status" value="1"/>
</dbReference>
<dbReference type="PIRSF" id="PIRSF000439">
    <property type="entry name" value="Oat_ACAT_DAG_ARE"/>
    <property type="match status" value="1"/>
</dbReference>
<sequence>MIAATPAKSKPSDVNLEQTFKGVSETSKIDLRRSRAAYRPLELSPTPSIFARNYQRNAVDFTGFFVLFWVAVSIMIFMSFLENFELTGRPVVGTIFKYFQSNLLDLAKADLAMSSMFLLAFPFQKIFALGYLRWYGLGVYLYSILILLFLSHCVLRCCLSNWSWTHRAMFILHSMVILMKLHSYNVVNGWYSYCYHSLNKLQSKKTDLDDDERSSVEFYEHCLNHHGNTYPENLTIPNALDFLFMPSLCYQLYYPRTAHVRIHYLIECALGTFGCIFLLVIISDHFMVPVLAKAIRTIIEAPEDASATYFAIRLGHTVAFLMFPFMLSFLLVFWVIFEGVCNFSAEITRFADRNFYDDWWNCWTWDQFARTWNKPVHYFLLRHVYVPLNSFMSKSLSTFFTFFVSSVLHELVMGCITLKIRGYGLFFQMTQIPYIIIQRQKFVRRHRLLGNIAFWFSIIIGIALIAALYILF</sequence>
<protein>
    <recommendedName>
        <fullName>Probable sterol O-acyltransferase 2</fullName>
        <ecNumber>2.3.1.-</ecNumber>
    </recommendedName>
    <alternativeName>
        <fullName>Sterol-ester synthase 2</fullName>
    </alternativeName>
</protein>